<accession>C3PHU9</accession>
<comment type="function">
    <text evidence="1">Negative regulator of class I heat shock genes (grpE-dnaK-dnaJ and groELS operons). Prevents heat-shock induction of these operons.</text>
</comment>
<comment type="similarity">
    <text evidence="1">Belongs to the HrcA family.</text>
</comment>
<feature type="chain" id="PRO_1000118297" description="Heat-inducible transcription repressor HrcA">
    <location>
        <begin position="1"/>
        <end position="344"/>
    </location>
</feature>
<sequence length="344" mass="37066">MSSSTDARRQEVLRAIVADYIASQSPVGSKALLERYQLGVSSATIRNDMAVLEAEGLIAQEHASSGRVPTQKGYRQFVDTLHDVKPLSKAERRAMLTFLEGGVDLEDVLRRSVQLLAQVTKQAAVVQLPNLKVSRVKHCEVVALSPVRLLLVLITDNGRVDQRNVELDDVIDPEQTHRLRDILNTALEGKTLTEASVELAALVDDSPADIRPHLLKAATTLIETLVEQPSDRLIMAGTSNLTRVALTEGLPSIIEALEEQVVVLKLLARVPDLGNVSVSIGEENEADELRQTSVVATRYGFGTGSEAAALGGLGVVGPTYMDYSGTISKVSAVARYVSEILAGE</sequence>
<organism>
    <name type="scientific">Corynebacterium aurimucosum (strain ATCC 700975 / DSM 44827 / CIP 107346 / CN-1)</name>
    <name type="common">Corynebacterium nigricans</name>
    <dbReference type="NCBI Taxonomy" id="548476"/>
    <lineage>
        <taxon>Bacteria</taxon>
        <taxon>Bacillati</taxon>
        <taxon>Actinomycetota</taxon>
        <taxon>Actinomycetes</taxon>
        <taxon>Mycobacteriales</taxon>
        <taxon>Corynebacteriaceae</taxon>
        <taxon>Corynebacterium</taxon>
    </lineage>
</organism>
<name>HRCA_CORA7</name>
<keyword id="KW-1185">Reference proteome</keyword>
<keyword id="KW-0678">Repressor</keyword>
<keyword id="KW-0346">Stress response</keyword>
<keyword id="KW-0804">Transcription</keyword>
<keyword id="KW-0805">Transcription regulation</keyword>
<gene>
    <name evidence="1" type="primary">hrcA</name>
    <name type="ordered locus">cauri_1810</name>
</gene>
<reference key="1">
    <citation type="journal article" date="2010" name="BMC Genomics">
        <title>Complete genome sequence and lifestyle of black-pigmented Corynebacterium aurimucosum ATCC 700975 (formerly C. nigricans CN-1) isolated from a vaginal swab of a woman with spontaneous abortion.</title>
        <authorList>
            <person name="Trost E."/>
            <person name="Gotker S."/>
            <person name="Schneider J."/>
            <person name="Schneiker-Bekel S."/>
            <person name="Szczepanowski R."/>
            <person name="Tilker A."/>
            <person name="Viehoever P."/>
            <person name="Arnold W."/>
            <person name="Bekel T."/>
            <person name="Blom J."/>
            <person name="Gartemann K.H."/>
            <person name="Linke B."/>
            <person name="Goesmann A."/>
            <person name="Puhler A."/>
            <person name="Shukla S.K."/>
            <person name="Tauch A."/>
        </authorList>
    </citation>
    <scope>NUCLEOTIDE SEQUENCE [LARGE SCALE GENOMIC DNA]</scope>
    <source>
        <strain>ATCC 700975 / DSM 44827 / CIP 107346 / CN-1</strain>
    </source>
</reference>
<proteinExistence type="inferred from homology"/>
<protein>
    <recommendedName>
        <fullName evidence="1">Heat-inducible transcription repressor HrcA</fullName>
    </recommendedName>
</protein>
<dbReference type="EMBL" id="CP001601">
    <property type="protein sequence ID" value="ACP33403.1"/>
    <property type="molecule type" value="Genomic_DNA"/>
</dbReference>
<dbReference type="RefSeq" id="WP_010190776.1">
    <property type="nucleotide sequence ID" value="NC_012590.1"/>
</dbReference>
<dbReference type="SMR" id="C3PHU9"/>
<dbReference type="STRING" id="548476.cauri_1810"/>
<dbReference type="GeneID" id="31924444"/>
<dbReference type="KEGG" id="car:cauri_1810"/>
<dbReference type="eggNOG" id="COG1420">
    <property type="taxonomic scope" value="Bacteria"/>
</dbReference>
<dbReference type="HOGENOM" id="CLU_050019_2_0_11"/>
<dbReference type="OrthoDB" id="9783139at2"/>
<dbReference type="Proteomes" id="UP000002077">
    <property type="component" value="Chromosome"/>
</dbReference>
<dbReference type="GO" id="GO:0003677">
    <property type="term" value="F:DNA binding"/>
    <property type="evidence" value="ECO:0007669"/>
    <property type="project" value="InterPro"/>
</dbReference>
<dbReference type="GO" id="GO:0003700">
    <property type="term" value="F:DNA-binding transcription factor activity"/>
    <property type="evidence" value="ECO:0007669"/>
    <property type="project" value="InterPro"/>
</dbReference>
<dbReference type="GO" id="GO:0045892">
    <property type="term" value="P:negative regulation of DNA-templated transcription"/>
    <property type="evidence" value="ECO:0007669"/>
    <property type="project" value="UniProtKB-UniRule"/>
</dbReference>
<dbReference type="FunFam" id="1.10.10.10:FF:000049">
    <property type="entry name" value="Heat-inducible transcription repressor HrcA"/>
    <property type="match status" value="1"/>
</dbReference>
<dbReference type="Gene3D" id="3.30.450.40">
    <property type="match status" value="1"/>
</dbReference>
<dbReference type="Gene3D" id="3.30.390.60">
    <property type="entry name" value="Heat-inducible transcription repressor hrca homolog, domain 3"/>
    <property type="match status" value="1"/>
</dbReference>
<dbReference type="Gene3D" id="1.10.10.10">
    <property type="entry name" value="Winged helix-like DNA-binding domain superfamily/Winged helix DNA-binding domain"/>
    <property type="match status" value="1"/>
</dbReference>
<dbReference type="HAMAP" id="MF_00081">
    <property type="entry name" value="HrcA"/>
    <property type="match status" value="1"/>
</dbReference>
<dbReference type="InterPro" id="IPR001034">
    <property type="entry name" value="DeoR_HTH"/>
</dbReference>
<dbReference type="InterPro" id="IPR029016">
    <property type="entry name" value="GAF-like_dom_sf"/>
</dbReference>
<dbReference type="InterPro" id="IPR002571">
    <property type="entry name" value="HrcA"/>
</dbReference>
<dbReference type="InterPro" id="IPR021153">
    <property type="entry name" value="HrcA_C"/>
</dbReference>
<dbReference type="InterPro" id="IPR036388">
    <property type="entry name" value="WH-like_DNA-bd_sf"/>
</dbReference>
<dbReference type="InterPro" id="IPR036390">
    <property type="entry name" value="WH_DNA-bd_sf"/>
</dbReference>
<dbReference type="InterPro" id="IPR023120">
    <property type="entry name" value="WHTH_transcript_rep_HrcA_IDD"/>
</dbReference>
<dbReference type="NCBIfam" id="TIGR00331">
    <property type="entry name" value="hrcA"/>
    <property type="match status" value="1"/>
</dbReference>
<dbReference type="PANTHER" id="PTHR34824">
    <property type="entry name" value="HEAT-INDUCIBLE TRANSCRIPTION REPRESSOR HRCA"/>
    <property type="match status" value="1"/>
</dbReference>
<dbReference type="PANTHER" id="PTHR34824:SF1">
    <property type="entry name" value="HEAT-INDUCIBLE TRANSCRIPTION REPRESSOR HRCA"/>
    <property type="match status" value="1"/>
</dbReference>
<dbReference type="Pfam" id="PF01628">
    <property type="entry name" value="HrcA"/>
    <property type="match status" value="1"/>
</dbReference>
<dbReference type="Pfam" id="PF08220">
    <property type="entry name" value="HTH_DeoR"/>
    <property type="match status" value="1"/>
</dbReference>
<dbReference type="PIRSF" id="PIRSF005485">
    <property type="entry name" value="HrcA"/>
    <property type="match status" value="1"/>
</dbReference>
<dbReference type="SUPFAM" id="SSF55781">
    <property type="entry name" value="GAF domain-like"/>
    <property type="match status" value="1"/>
</dbReference>
<dbReference type="SUPFAM" id="SSF46785">
    <property type="entry name" value="Winged helix' DNA-binding domain"/>
    <property type="match status" value="1"/>
</dbReference>
<evidence type="ECO:0000255" key="1">
    <source>
        <dbReference type="HAMAP-Rule" id="MF_00081"/>
    </source>
</evidence>